<dbReference type="EC" id="2.7.1.167" evidence="1"/>
<dbReference type="EC" id="2.7.7.70" evidence="1"/>
<dbReference type="EMBL" id="CP000948">
    <property type="protein sequence ID" value="ACB04137.1"/>
    <property type="molecule type" value="Genomic_DNA"/>
</dbReference>
<dbReference type="RefSeq" id="WP_000869178.1">
    <property type="nucleotide sequence ID" value="NC_010473.1"/>
</dbReference>
<dbReference type="SMR" id="B1XG57"/>
<dbReference type="GeneID" id="75205361"/>
<dbReference type="KEGG" id="ecd:ECDH10B_3227"/>
<dbReference type="HOGENOM" id="CLU_021150_2_1_6"/>
<dbReference type="UniPathway" id="UPA00356">
    <property type="reaction ID" value="UER00437"/>
</dbReference>
<dbReference type="UniPathway" id="UPA00356">
    <property type="reaction ID" value="UER00439"/>
</dbReference>
<dbReference type="GO" id="GO:0005829">
    <property type="term" value="C:cytosol"/>
    <property type="evidence" value="ECO:0007669"/>
    <property type="project" value="TreeGrafter"/>
</dbReference>
<dbReference type="GO" id="GO:0005524">
    <property type="term" value="F:ATP binding"/>
    <property type="evidence" value="ECO:0007669"/>
    <property type="project" value="UniProtKB-UniRule"/>
</dbReference>
<dbReference type="GO" id="GO:0033785">
    <property type="term" value="F:heptose 7-phosphate kinase activity"/>
    <property type="evidence" value="ECO:0007669"/>
    <property type="project" value="UniProtKB-UniRule"/>
</dbReference>
<dbReference type="GO" id="GO:0033786">
    <property type="term" value="F:heptose-1-phosphate adenylyltransferase activity"/>
    <property type="evidence" value="ECO:0007669"/>
    <property type="project" value="UniProtKB-UniRule"/>
</dbReference>
<dbReference type="GO" id="GO:0016773">
    <property type="term" value="F:phosphotransferase activity, alcohol group as acceptor"/>
    <property type="evidence" value="ECO:0007669"/>
    <property type="project" value="InterPro"/>
</dbReference>
<dbReference type="GO" id="GO:0097171">
    <property type="term" value="P:ADP-L-glycero-beta-D-manno-heptose biosynthetic process"/>
    <property type="evidence" value="ECO:0007669"/>
    <property type="project" value="UniProtKB-UniPathway"/>
</dbReference>
<dbReference type="CDD" id="cd01172">
    <property type="entry name" value="RfaE_like"/>
    <property type="match status" value="1"/>
</dbReference>
<dbReference type="FunFam" id="3.40.1190.20:FF:000002">
    <property type="entry name" value="Bifunctional protein HldE"/>
    <property type="match status" value="1"/>
</dbReference>
<dbReference type="FunFam" id="3.40.50.620:FF:000028">
    <property type="entry name" value="Bifunctional protein HldE"/>
    <property type="match status" value="1"/>
</dbReference>
<dbReference type="Gene3D" id="3.40.1190.20">
    <property type="match status" value="1"/>
</dbReference>
<dbReference type="Gene3D" id="3.40.50.620">
    <property type="entry name" value="HUPs"/>
    <property type="match status" value="1"/>
</dbReference>
<dbReference type="HAMAP" id="MF_01603">
    <property type="entry name" value="HldE"/>
    <property type="match status" value="1"/>
</dbReference>
<dbReference type="InterPro" id="IPR023030">
    <property type="entry name" value="Bifunc_HldE"/>
</dbReference>
<dbReference type="InterPro" id="IPR002173">
    <property type="entry name" value="Carboh/pur_kinase_PfkB_CS"/>
</dbReference>
<dbReference type="InterPro" id="IPR004821">
    <property type="entry name" value="Cyt_trans-like"/>
</dbReference>
<dbReference type="InterPro" id="IPR011611">
    <property type="entry name" value="PfkB_dom"/>
</dbReference>
<dbReference type="InterPro" id="IPR011913">
    <property type="entry name" value="RfaE_dom_I"/>
</dbReference>
<dbReference type="InterPro" id="IPR011914">
    <property type="entry name" value="RfaE_dom_II"/>
</dbReference>
<dbReference type="InterPro" id="IPR029056">
    <property type="entry name" value="Ribokinase-like"/>
</dbReference>
<dbReference type="InterPro" id="IPR014729">
    <property type="entry name" value="Rossmann-like_a/b/a_fold"/>
</dbReference>
<dbReference type="NCBIfam" id="TIGR00125">
    <property type="entry name" value="cyt_tran_rel"/>
    <property type="match status" value="1"/>
</dbReference>
<dbReference type="NCBIfam" id="NF008454">
    <property type="entry name" value="PRK11316.1"/>
    <property type="match status" value="1"/>
</dbReference>
<dbReference type="NCBIfam" id="TIGR02198">
    <property type="entry name" value="rfaE_dom_I"/>
    <property type="match status" value="1"/>
</dbReference>
<dbReference type="NCBIfam" id="TIGR02199">
    <property type="entry name" value="rfaE_dom_II"/>
    <property type="match status" value="1"/>
</dbReference>
<dbReference type="PANTHER" id="PTHR46969">
    <property type="entry name" value="BIFUNCTIONAL PROTEIN HLDE"/>
    <property type="match status" value="1"/>
</dbReference>
<dbReference type="PANTHER" id="PTHR46969:SF1">
    <property type="entry name" value="BIFUNCTIONAL PROTEIN HLDE"/>
    <property type="match status" value="1"/>
</dbReference>
<dbReference type="Pfam" id="PF01467">
    <property type="entry name" value="CTP_transf_like"/>
    <property type="match status" value="1"/>
</dbReference>
<dbReference type="Pfam" id="PF00294">
    <property type="entry name" value="PfkB"/>
    <property type="match status" value="1"/>
</dbReference>
<dbReference type="SUPFAM" id="SSF52374">
    <property type="entry name" value="Nucleotidylyl transferase"/>
    <property type="match status" value="1"/>
</dbReference>
<dbReference type="SUPFAM" id="SSF53613">
    <property type="entry name" value="Ribokinase-like"/>
    <property type="match status" value="1"/>
</dbReference>
<dbReference type="PROSITE" id="PS00583">
    <property type="entry name" value="PFKB_KINASES_1"/>
    <property type="match status" value="1"/>
</dbReference>
<organism>
    <name type="scientific">Escherichia coli (strain K12 / DH10B)</name>
    <dbReference type="NCBI Taxonomy" id="316385"/>
    <lineage>
        <taxon>Bacteria</taxon>
        <taxon>Pseudomonadati</taxon>
        <taxon>Pseudomonadota</taxon>
        <taxon>Gammaproteobacteria</taxon>
        <taxon>Enterobacterales</taxon>
        <taxon>Enterobacteriaceae</taxon>
        <taxon>Escherichia</taxon>
    </lineage>
</organism>
<gene>
    <name evidence="1" type="primary">hldE</name>
    <name type="ordered locus">ECDH10B_3227</name>
</gene>
<evidence type="ECO:0000255" key="1">
    <source>
        <dbReference type="HAMAP-Rule" id="MF_01603"/>
    </source>
</evidence>
<proteinExistence type="inferred from homology"/>
<feature type="chain" id="PRO_1000185806" description="Bifunctional protein HldE">
    <location>
        <begin position="1"/>
        <end position="477"/>
    </location>
</feature>
<feature type="region of interest" description="Ribokinase">
    <location>
        <begin position="1"/>
        <end position="318"/>
    </location>
</feature>
<feature type="region of interest" description="Cytidylyltransferase">
    <location>
        <begin position="344"/>
        <end position="477"/>
    </location>
</feature>
<feature type="active site" evidence="1">
    <location>
        <position position="264"/>
    </location>
</feature>
<feature type="binding site" evidence="1">
    <location>
        <begin position="195"/>
        <end position="198"/>
    </location>
    <ligand>
        <name>ATP</name>
        <dbReference type="ChEBI" id="CHEBI:30616"/>
    </ligand>
</feature>
<feature type="modified residue" description="N6-acetyllysine" evidence="1">
    <location>
        <position position="179"/>
    </location>
</feature>
<keyword id="KW-0007">Acetylation</keyword>
<keyword id="KW-0067">ATP-binding</keyword>
<keyword id="KW-0119">Carbohydrate metabolism</keyword>
<keyword id="KW-0418">Kinase</keyword>
<keyword id="KW-0511">Multifunctional enzyme</keyword>
<keyword id="KW-0547">Nucleotide-binding</keyword>
<keyword id="KW-0548">Nucleotidyltransferase</keyword>
<keyword id="KW-0808">Transferase</keyword>
<sequence length="477" mass="51051">MKVTLPEFERAGVMVVGDVMLDRYWYGPTSRISPEAPVPVVKVNTIEERPGGAANVAMNIASLGANARLVGLTGIDDAARALSKSLADVNVKCDFVSVPTHPTITKLRVLSRNQQLIRLDFEEGFEGVDPQPLHERINQALSSIGALVLSDYAKGALASVQQMIQLARKAGVPVLIDPKGTDFERYRGATLLTPNLSEFEAVVGKCKTEEEIVERGMKLIADYELSALLVTRSEQGMSLLQPGKAPLHMPTQAQEVYDVTGAGDTVIGVLAATLAAGNSLEEACFFANAAAGVVVGKLGTSTVSPIELENAVRGRADTGFGVMTEEELKLAVAAARKRGEKVVMTNGVFDILHAGHVSYLANARKLGDRLIVAVNSDASTKRLKGDSRPVNPLEQRMIVLGALEAVDWVVSFEEDTPQRLIAGILPDLLVKGGDYKPEEIAGSKEVWANGGEVLVLNFEDGCSTTNIIKKIQQDKKG</sequence>
<name>HLDE_ECODH</name>
<comment type="function">
    <text evidence="1">Catalyzes the phosphorylation of D-glycero-D-manno-heptose 7-phosphate at the C-1 position to selectively form D-glycero-beta-D-manno-heptose-1,7-bisphosphate.</text>
</comment>
<comment type="function">
    <text evidence="1">Catalyzes the ADP transfer from ATP to D-glycero-beta-D-manno-heptose 1-phosphate, yielding ADP-D-glycero-beta-D-manno-heptose.</text>
</comment>
<comment type="catalytic activity">
    <reaction evidence="1">
        <text>D-glycero-beta-D-manno-heptose 7-phosphate + ATP = D-glycero-beta-D-manno-heptose 1,7-bisphosphate + ADP + H(+)</text>
        <dbReference type="Rhea" id="RHEA:27473"/>
        <dbReference type="ChEBI" id="CHEBI:15378"/>
        <dbReference type="ChEBI" id="CHEBI:30616"/>
        <dbReference type="ChEBI" id="CHEBI:60204"/>
        <dbReference type="ChEBI" id="CHEBI:60208"/>
        <dbReference type="ChEBI" id="CHEBI:456216"/>
        <dbReference type="EC" id="2.7.1.167"/>
    </reaction>
</comment>
<comment type="catalytic activity">
    <reaction evidence="1">
        <text>D-glycero-beta-D-manno-heptose 1-phosphate + ATP + H(+) = ADP-D-glycero-beta-D-manno-heptose + diphosphate</text>
        <dbReference type="Rhea" id="RHEA:27465"/>
        <dbReference type="ChEBI" id="CHEBI:15378"/>
        <dbReference type="ChEBI" id="CHEBI:30616"/>
        <dbReference type="ChEBI" id="CHEBI:33019"/>
        <dbReference type="ChEBI" id="CHEBI:59967"/>
        <dbReference type="ChEBI" id="CHEBI:61593"/>
        <dbReference type="EC" id="2.7.7.70"/>
    </reaction>
</comment>
<comment type="pathway">
    <text evidence="1">Nucleotide-sugar biosynthesis; ADP-L-glycero-beta-D-manno-heptose biosynthesis; ADP-L-glycero-beta-D-manno-heptose from D-glycero-beta-D-manno-heptose 7-phosphate: step 1/4.</text>
</comment>
<comment type="pathway">
    <text evidence="1">Nucleotide-sugar biosynthesis; ADP-L-glycero-beta-D-manno-heptose biosynthesis; ADP-L-glycero-beta-D-manno-heptose from D-glycero-beta-D-manno-heptose 7-phosphate: step 3/4.</text>
</comment>
<comment type="subunit">
    <text evidence="1">Homodimer.</text>
</comment>
<comment type="similarity">
    <text evidence="1">In the N-terminal section; belongs to the carbohydrate kinase PfkB family.</text>
</comment>
<comment type="similarity">
    <text evidence="1">In the C-terminal section; belongs to the cytidylyltransferase family.</text>
</comment>
<protein>
    <recommendedName>
        <fullName evidence="1">Bifunctional protein HldE</fullName>
    </recommendedName>
    <domain>
        <recommendedName>
            <fullName evidence="1">D-beta-D-heptose 7-phosphate kinase</fullName>
            <ecNumber evidence="1">2.7.1.167</ecNumber>
        </recommendedName>
        <alternativeName>
            <fullName evidence="1">D-beta-D-heptose 7-phosphotransferase</fullName>
        </alternativeName>
        <alternativeName>
            <fullName evidence="1">D-glycero-beta-D-manno-heptose-7-phosphate kinase</fullName>
        </alternativeName>
    </domain>
    <domain>
        <recommendedName>
            <fullName evidence="1">D-beta-D-heptose 1-phosphate adenylyltransferase</fullName>
            <ecNumber evidence="1">2.7.7.70</ecNumber>
        </recommendedName>
        <alternativeName>
            <fullName evidence="1">D-glycero-beta-D-manno-heptose 1-phosphate adenylyltransferase</fullName>
        </alternativeName>
    </domain>
</protein>
<reference key="1">
    <citation type="journal article" date="2008" name="J. Bacteriol.">
        <title>The complete genome sequence of Escherichia coli DH10B: insights into the biology of a laboratory workhorse.</title>
        <authorList>
            <person name="Durfee T."/>
            <person name="Nelson R."/>
            <person name="Baldwin S."/>
            <person name="Plunkett G. III"/>
            <person name="Burland V."/>
            <person name="Mau B."/>
            <person name="Petrosino J.F."/>
            <person name="Qin X."/>
            <person name="Muzny D.M."/>
            <person name="Ayele M."/>
            <person name="Gibbs R.A."/>
            <person name="Csorgo B."/>
            <person name="Posfai G."/>
            <person name="Weinstock G.M."/>
            <person name="Blattner F.R."/>
        </authorList>
    </citation>
    <scope>NUCLEOTIDE SEQUENCE [LARGE SCALE GENOMIC DNA]</scope>
    <source>
        <strain>K12 / DH10B</strain>
    </source>
</reference>
<accession>B1XG57</accession>